<keyword id="KW-0028">Amino-acid biosynthesis</keyword>
<keyword id="KW-0963">Cytoplasm</keyword>
<keyword id="KW-0220">Diaminopimelate biosynthesis</keyword>
<keyword id="KW-0456">Lyase</keyword>
<keyword id="KW-0457">Lysine biosynthesis</keyword>
<keyword id="KW-1185">Reference proteome</keyword>
<keyword id="KW-0704">Schiff base</keyword>
<organism>
    <name type="scientific">Bradyrhizobium diazoefficiens (strain JCM 10833 / BCRC 13528 / IAM 13628 / NBRC 14792 / USDA 110)</name>
    <dbReference type="NCBI Taxonomy" id="224911"/>
    <lineage>
        <taxon>Bacteria</taxon>
        <taxon>Pseudomonadati</taxon>
        <taxon>Pseudomonadota</taxon>
        <taxon>Alphaproteobacteria</taxon>
        <taxon>Hyphomicrobiales</taxon>
        <taxon>Nitrobacteraceae</taxon>
        <taxon>Bradyrhizobium</taxon>
    </lineage>
</organism>
<accession>Q9RH76</accession>
<gene>
    <name evidence="1" type="primary">dapA</name>
    <name type="ordered locus">bll5072</name>
</gene>
<sequence length="296" mass="32098">MAAKTKFRGSFTALVTPFKNGSLDEAAFRSLVNWQISEGTNGLVPVGTTGESPTLSHDEHKKVVEWCIEEAKGRVPVVAGAGSNSTKEAIELAQHAEKAGADAVLVVTPYYNKPTQEGMYQHFKAINDAIGIPIIIYNIPPRSVIDMSVDTMKRLWELKNIAGVKDATASMVRVSQQRAAMGEDFNQLSGEDATILGYMAHGGHGCISVTSNVAPRLCSEFHTAWQKGDHATALKLHDKLMPLHNNLFIESNPAPIKYAMSLLGKLDETLRLPMVPVTEPTRVAVRSAMVHAGLIN</sequence>
<comment type="function">
    <text evidence="1">Catalyzes the condensation of (S)-aspartate-beta-semialdehyde [(S)-ASA] and pyruvate to 4-hydroxy-tetrahydrodipicolinate (HTPA).</text>
</comment>
<comment type="catalytic activity">
    <reaction evidence="1">
        <text>L-aspartate 4-semialdehyde + pyruvate = (2S,4S)-4-hydroxy-2,3,4,5-tetrahydrodipicolinate + H2O + H(+)</text>
        <dbReference type="Rhea" id="RHEA:34171"/>
        <dbReference type="ChEBI" id="CHEBI:15361"/>
        <dbReference type="ChEBI" id="CHEBI:15377"/>
        <dbReference type="ChEBI" id="CHEBI:15378"/>
        <dbReference type="ChEBI" id="CHEBI:67139"/>
        <dbReference type="ChEBI" id="CHEBI:537519"/>
        <dbReference type="EC" id="4.3.3.7"/>
    </reaction>
</comment>
<comment type="pathway">
    <text evidence="1">Amino-acid biosynthesis; L-lysine biosynthesis via DAP pathway; (S)-tetrahydrodipicolinate from L-aspartate: step 3/4.</text>
</comment>
<comment type="subunit">
    <text evidence="1">Homotetramer; dimer of dimers.</text>
</comment>
<comment type="subcellular location">
    <subcellularLocation>
        <location evidence="1">Cytoplasm</location>
    </subcellularLocation>
</comment>
<comment type="similarity">
    <text evidence="1">Belongs to the DapA family.</text>
</comment>
<comment type="caution">
    <text evidence="2">Was originally thought to be a dihydrodipicolinate synthase (DHDPS), catalyzing the condensation of (S)-aspartate-beta-semialdehyde [(S)-ASA] and pyruvate to dihydrodipicolinate (DHDP). However, it was shown in E.coli that the product of the enzymatic reaction is not dihydrodipicolinate but in fact (4S)-4-hydroxy-2,3,4,5-tetrahydro-(2S)-dipicolinic acid (HTPA), and that the consecutive dehydration reaction leading to DHDP is not spontaneous but catalyzed by DapB.</text>
</comment>
<comment type="sequence caution" evidence="2">
    <conflict type="erroneous initiation">
        <sequence resource="EMBL-CDS" id="BAC50337"/>
    </conflict>
</comment>
<dbReference type="EC" id="4.3.3.7" evidence="1"/>
<dbReference type="EMBL" id="AF065159">
    <property type="protein sequence ID" value="AAF04320.1"/>
    <property type="molecule type" value="Genomic_DNA"/>
</dbReference>
<dbReference type="EMBL" id="BA000040">
    <property type="protein sequence ID" value="BAC50337.1"/>
    <property type="status" value="ALT_INIT"/>
    <property type="molecule type" value="Genomic_DNA"/>
</dbReference>
<dbReference type="RefSeq" id="NP_771712.1">
    <property type="nucleotide sequence ID" value="NC_004463.1"/>
</dbReference>
<dbReference type="RefSeq" id="WP_028171604.1">
    <property type="nucleotide sequence ID" value="NC_004463.1"/>
</dbReference>
<dbReference type="SMR" id="Q9RH76"/>
<dbReference type="FunCoup" id="Q9RH76">
    <property type="interactions" value="607"/>
</dbReference>
<dbReference type="STRING" id="224911.AAV28_22730"/>
<dbReference type="EnsemblBacteria" id="BAC50337">
    <property type="protein sequence ID" value="BAC50337"/>
    <property type="gene ID" value="BAC50337"/>
</dbReference>
<dbReference type="GeneID" id="46492079"/>
<dbReference type="KEGG" id="bja:bll5072"/>
<dbReference type="PATRIC" id="fig|224911.44.peg.4940"/>
<dbReference type="eggNOG" id="COG0329">
    <property type="taxonomic scope" value="Bacteria"/>
</dbReference>
<dbReference type="HOGENOM" id="CLU_049343_7_1_5"/>
<dbReference type="InParanoid" id="Q9RH76"/>
<dbReference type="OrthoDB" id="9782828at2"/>
<dbReference type="UniPathway" id="UPA00034">
    <property type="reaction ID" value="UER00017"/>
</dbReference>
<dbReference type="Proteomes" id="UP000002526">
    <property type="component" value="Chromosome"/>
</dbReference>
<dbReference type="GO" id="GO:0005829">
    <property type="term" value="C:cytosol"/>
    <property type="evidence" value="ECO:0000318"/>
    <property type="project" value="GO_Central"/>
</dbReference>
<dbReference type="GO" id="GO:0008840">
    <property type="term" value="F:4-hydroxy-tetrahydrodipicolinate synthase activity"/>
    <property type="evidence" value="ECO:0000318"/>
    <property type="project" value="GO_Central"/>
</dbReference>
<dbReference type="GO" id="GO:0019877">
    <property type="term" value="P:diaminopimelate biosynthetic process"/>
    <property type="evidence" value="ECO:0007669"/>
    <property type="project" value="UniProtKB-UniRule"/>
</dbReference>
<dbReference type="GO" id="GO:0009089">
    <property type="term" value="P:lysine biosynthetic process via diaminopimelate"/>
    <property type="evidence" value="ECO:0007669"/>
    <property type="project" value="UniProtKB-UniRule"/>
</dbReference>
<dbReference type="CDD" id="cd00950">
    <property type="entry name" value="DHDPS"/>
    <property type="match status" value="1"/>
</dbReference>
<dbReference type="Gene3D" id="3.20.20.70">
    <property type="entry name" value="Aldolase class I"/>
    <property type="match status" value="1"/>
</dbReference>
<dbReference type="HAMAP" id="MF_00418">
    <property type="entry name" value="DapA"/>
    <property type="match status" value="1"/>
</dbReference>
<dbReference type="InterPro" id="IPR013785">
    <property type="entry name" value="Aldolase_TIM"/>
</dbReference>
<dbReference type="InterPro" id="IPR005263">
    <property type="entry name" value="DapA"/>
</dbReference>
<dbReference type="InterPro" id="IPR002220">
    <property type="entry name" value="DapA-like"/>
</dbReference>
<dbReference type="InterPro" id="IPR020625">
    <property type="entry name" value="Schiff_base-form_aldolases_AS"/>
</dbReference>
<dbReference type="InterPro" id="IPR020624">
    <property type="entry name" value="Schiff_base-form_aldolases_CS"/>
</dbReference>
<dbReference type="NCBIfam" id="TIGR00674">
    <property type="entry name" value="dapA"/>
    <property type="match status" value="1"/>
</dbReference>
<dbReference type="PANTHER" id="PTHR12128:SF66">
    <property type="entry name" value="4-HYDROXY-2-OXOGLUTARATE ALDOLASE, MITOCHONDRIAL"/>
    <property type="match status" value="1"/>
</dbReference>
<dbReference type="PANTHER" id="PTHR12128">
    <property type="entry name" value="DIHYDRODIPICOLINATE SYNTHASE"/>
    <property type="match status" value="1"/>
</dbReference>
<dbReference type="Pfam" id="PF00701">
    <property type="entry name" value="DHDPS"/>
    <property type="match status" value="1"/>
</dbReference>
<dbReference type="PIRSF" id="PIRSF001365">
    <property type="entry name" value="DHDPS"/>
    <property type="match status" value="1"/>
</dbReference>
<dbReference type="PRINTS" id="PR00146">
    <property type="entry name" value="DHPICSNTHASE"/>
</dbReference>
<dbReference type="SMART" id="SM01130">
    <property type="entry name" value="DHDPS"/>
    <property type="match status" value="1"/>
</dbReference>
<dbReference type="SUPFAM" id="SSF51569">
    <property type="entry name" value="Aldolase"/>
    <property type="match status" value="1"/>
</dbReference>
<dbReference type="PROSITE" id="PS00665">
    <property type="entry name" value="DHDPS_1"/>
    <property type="match status" value="1"/>
</dbReference>
<dbReference type="PROSITE" id="PS00666">
    <property type="entry name" value="DHDPS_2"/>
    <property type="match status" value="1"/>
</dbReference>
<evidence type="ECO:0000255" key="1">
    <source>
        <dbReference type="HAMAP-Rule" id="MF_00418"/>
    </source>
</evidence>
<evidence type="ECO:0000305" key="2"/>
<proteinExistence type="inferred from homology"/>
<reference key="1">
    <citation type="submission" date="2000-01" db="EMBL/GenBank/DDBJ databases">
        <title>Extended DNA sequencing in the upstream region of sipF in Bradyrhizobium japonicum.</title>
        <authorList>
            <person name="Mueller P."/>
            <person name="Stingel D."/>
        </authorList>
    </citation>
    <scope>NUCLEOTIDE SEQUENCE [GENOMIC DNA]</scope>
    <source>
        <strain>USDA 110spc4</strain>
    </source>
</reference>
<reference key="2">
    <citation type="journal article" date="2002" name="DNA Res.">
        <title>Complete genomic sequence of nitrogen-fixing symbiotic bacterium Bradyrhizobium japonicum USDA110.</title>
        <authorList>
            <person name="Kaneko T."/>
            <person name="Nakamura Y."/>
            <person name="Sato S."/>
            <person name="Minamisawa K."/>
            <person name="Uchiumi T."/>
            <person name="Sasamoto S."/>
            <person name="Watanabe A."/>
            <person name="Idesawa K."/>
            <person name="Iriguchi M."/>
            <person name="Kawashima K."/>
            <person name="Kohara M."/>
            <person name="Matsumoto M."/>
            <person name="Shimpo S."/>
            <person name="Tsuruoka H."/>
            <person name="Wada T."/>
            <person name="Yamada M."/>
            <person name="Tabata S."/>
        </authorList>
    </citation>
    <scope>NUCLEOTIDE SEQUENCE [LARGE SCALE GENOMIC DNA]</scope>
    <source>
        <strain>JCM 10833 / BCRC 13528 / IAM 13628 / NBRC 14792 / USDA 110</strain>
    </source>
</reference>
<feature type="chain" id="PRO_0000103086" description="4-hydroxy-tetrahydrodipicolinate synthase">
    <location>
        <begin position="1"/>
        <end position="296"/>
    </location>
</feature>
<feature type="active site" description="Proton donor/acceptor" evidence="1">
    <location>
        <position position="137"/>
    </location>
</feature>
<feature type="active site" description="Schiff-base intermediate with substrate" evidence="1">
    <location>
        <position position="165"/>
    </location>
</feature>
<feature type="binding site" evidence="1">
    <location>
        <position position="49"/>
    </location>
    <ligand>
        <name>pyruvate</name>
        <dbReference type="ChEBI" id="CHEBI:15361"/>
    </ligand>
</feature>
<feature type="binding site" evidence="1">
    <location>
        <position position="207"/>
    </location>
    <ligand>
        <name>pyruvate</name>
        <dbReference type="ChEBI" id="CHEBI:15361"/>
    </ligand>
</feature>
<feature type="site" description="Part of a proton relay during catalysis" evidence="1">
    <location>
        <position position="48"/>
    </location>
</feature>
<feature type="site" description="Part of a proton relay during catalysis" evidence="1">
    <location>
        <position position="111"/>
    </location>
</feature>
<feature type="sequence conflict" description="In Ref. 1; AAF04320." evidence="2" ref="1">
    <original>D</original>
    <variation>V</variation>
    <location>
        <position position="192"/>
    </location>
</feature>
<feature type="sequence conflict" description="In Ref. 1; AAF04320." evidence="2" ref="1">
    <original>HG</original>
    <variation>QC</variation>
    <location>
        <begin position="201"/>
        <end position="202"/>
    </location>
</feature>
<feature type="sequence conflict" description="In Ref. 1; AAF04320." evidence="2" ref="1">
    <original>HA</original>
    <variation>QR</variation>
    <location>
        <begin position="230"/>
        <end position="231"/>
    </location>
</feature>
<feature type="sequence conflict" description="In Ref. 1; AAF04320." evidence="2" ref="1">
    <original>L</original>
    <variation>V</variation>
    <location>
        <position position="243"/>
    </location>
</feature>
<name>DAPA_BRADU</name>
<protein>
    <recommendedName>
        <fullName evidence="1">4-hydroxy-tetrahydrodipicolinate synthase</fullName>
        <shortName evidence="1">HTPA synthase</shortName>
        <ecNumber evidence="1">4.3.3.7</ecNumber>
    </recommendedName>
</protein>